<evidence type="ECO:0000250" key="1"/>
<evidence type="ECO:0000255" key="2"/>
<evidence type="ECO:0000305" key="3"/>
<name>ICAA_STAAM</name>
<comment type="function">
    <text evidence="1">N-acetylglucosaminyltransferase that catalyzes the polymerization of single monomer units of UDP-N-acetylglucosamine to produce the linear homomer poly-beta-1,6-N-acetyl-D-glucosamine (PNAG, also referred to as PIA), a biofilm adhesin polysaccharide. Requires IcaD for full activity (By similarity).</text>
</comment>
<comment type="subcellular location">
    <subcellularLocation>
        <location evidence="1">Cell membrane</location>
        <topology evidence="1">Multi-pass membrane protein</topology>
    </subcellularLocation>
</comment>
<comment type="similarity">
    <text evidence="3">Belongs to the glycosyltransferase 2 family.</text>
</comment>
<sequence length="412" mass="47770">MQFFNFLLFYPVFMSIYWIVGSIYFYFTREIRYSLNKKPDINVDELEGITFLLACYNESETIEDTLSNVLALKYEKKEIIIINDGSSDNTAELIYKIKENNDFIFVDLQENRGKANALNQGIKQASYDYVMCLDADTIVDQDAPYYMIENFKHDPKLGAVTGNPRIRNKSSILGKIQTIEYASLIGCIKRSQTLAGAVNTISGVFTLFKKSAVVDVGYWDTDMITEDIAVSWKLHLRGYRIKYEPLAMCWMLVPETLGGLWKQRVRWAQGGHEVLLRDFFSTMKTKRFPLYILMFEQIISILWVYIVLLYLGYLFITANFLDYTFMTYSFSIFLLSSFTMTFINVIQFTVALFIDSRYEKKNMAGLIFVSWYPTVYWIINAAVVLVAFPKALKRKKGGYATWSSPDRGNTQR</sequence>
<dbReference type="EC" id="2.4.1.-"/>
<dbReference type="EMBL" id="BA000017">
    <property type="protein sequence ID" value="BAB58828.1"/>
    <property type="molecule type" value="Genomic_DNA"/>
</dbReference>
<dbReference type="RefSeq" id="WP_001159430.1">
    <property type="nucleotide sequence ID" value="NC_002758.2"/>
</dbReference>
<dbReference type="SMR" id="Q99QX3"/>
<dbReference type="CAZy" id="GT2">
    <property type="family name" value="Glycosyltransferase Family 2"/>
</dbReference>
<dbReference type="KEGG" id="sav:SAV2666"/>
<dbReference type="HOGENOM" id="CLU_023978_0_1_9"/>
<dbReference type="PhylomeDB" id="Q99QX3"/>
<dbReference type="Proteomes" id="UP000002481">
    <property type="component" value="Chromosome"/>
</dbReference>
<dbReference type="GO" id="GO:0005886">
    <property type="term" value="C:plasma membrane"/>
    <property type="evidence" value="ECO:0007669"/>
    <property type="project" value="UniProtKB-SubCell"/>
</dbReference>
<dbReference type="GO" id="GO:0008375">
    <property type="term" value="F:acetylglucosaminyltransferase activity"/>
    <property type="evidence" value="ECO:0007669"/>
    <property type="project" value="InterPro"/>
</dbReference>
<dbReference type="GO" id="GO:0043708">
    <property type="term" value="P:cell adhesion involved in biofilm formation"/>
    <property type="evidence" value="ECO:0007669"/>
    <property type="project" value="InterPro"/>
</dbReference>
<dbReference type="CDD" id="cd06423">
    <property type="entry name" value="CESA_like"/>
    <property type="match status" value="1"/>
</dbReference>
<dbReference type="Gene3D" id="3.90.550.10">
    <property type="entry name" value="Spore Coat Polysaccharide Biosynthesis Protein SpsA, Chain A"/>
    <property type="match status" value="1"/>
</dbReference>
<dbReference type="InterPro" id="IPR001173">
    <property type="entry name" value="Glyco_trans_2-like"/>
</dbReference>
<dbReference type="InterPro" id="IPR029044">
    <property type="entry name" value="Nucleotide-diphossugar_trans"/>
</dbReference>
<dbReference type="InterPro" id="IPR023853">
    <property type="entry name" value="PGA_PgaC/IcaA"/>
</dbReference>
<dbReference type="NCBIfam" id="TIGR03937">
    <property type="entry name" value="PgaC_IcaA"/>
    <property type="match status" value="1"/>
</dbReference>
<dbReference type="PANTHER" id="PTHR43630">
    <property type="entry name" value="POLY-BETA-1,6-N-ACETYL-D-GLUCOSAMINE SYNTHASE"/>
    <property type="match status" value="1"/>
</dbReference>
<dbReference type="PANTHER" id="PTHR43630:SF1">
    <property type="entry name" value="POLY-BETA-1,6-N-ACETYL-D-GLUCOSAMINE SYNTHASE"/>
    <property type="match status" value="1"/>
</dbReference>
<dbReference type="Pfam" id="PF00535">
    <property type="entry name" value="Glycos_transf_2"/>
    <property type="match status" value="1"/>
</dbReference>
<dbReference type="SUPFAM" id="SSF53448">
    <property type="entry name" value="Nucleotide-diphospho-sugar transferases"/>
    <property type="match status" value="1"/>
</dbReference>
<gene>
    <name type="primary">icaA</name>
    <name type="ordered locus">SAV2666</name>
</gene>
<keyword id="KW-1003">Cell membrane</keyword>
<keyword id="KW-0328">Glycosyltransferase</keyword>
<keyword id="KW-0472">Membrane</keyword>
<keyword id="KW-0808">Transferase</keyword>
<keyword id="KW-0812">Transmembrane</keyword>
<keyword id="KW-1133">Transmembrane helix</keyword>
<reference key="1">
    <citation type="journal article" date="2001" name="Lancet">
        <title>Whole genome sequencing of meticillin-resistant Staphylococcus aureus.</title>
        <authorList>
            <person name="Kuroda M."/>
            <person name="Ohta T."/>
            <person name="Uchiyama I."/>
            <person name="Baba T."/>
            <person name="Yuzawa H."/>
            <person name="Kobayashi I."/>
            <person name="Cui L."/>
            <person name="Oguchi A."/>
            <person name="Aoki K."/>
            <person name="Nagai Y."/>
            <person name="Lian J.-Q."/>
            <person name="Ito T."/>
            <person name="Kanamori M."/>
            <person name="Matsumaru H."/>
            <person name="Maruyama A."/>
            <person name="Murakami H."/>
            <person name="Hosoyama A."/>
            <person name="Mizutani-Ui Y."/>
            <person name="Takahashi N.K."/>
            <person name="Sawano T."/>
            <person name="Inoue R."/>
            <person name="Kaito C."/>
            <person name="Sekimizu K."/>
            <person name="Hirakawa H."/>
            <person name="Kuhara S."/>
            <person name="Goto S."/>
            <person name="Yabuzaki J."/>
            <person name="Kanehisa M."/>
            <person name="Yamashita A."/>
            <person name="Oshima K."/>
            <person name="Furuya K."/>
            <person name="Yoshino C."/>
            <person name="Shiba T."/>
            <person name="Hattori M."/>
            <person name="Ogasawara N."/>
            <person name="Hayashi H."/>
            <person name="Hiramatsu K."/>
        </authorList>
    </citation>
    <scope>NUCLEOTIDE SEQUENCE [LARGE SCALE GENOMIC DNA]</scope>
    <source>
        <strain>Mu50 / ATCC 700699</strain>
    </source>
</reference>
<organism>
    <name type="scientific">Staphylococcus aureus (strain Mu50 / ATCC 700699)</name>
    <dbReference type="NCBI Taxonomy" id="158878"/>
    <lineage>
        <taxon>Bacteria</taxon>
        <taxon>Bacillati</taxon>
        <taxon>Bacillota</taxon>
        <taxon>Bacilli</taxon>
        <taxon>Bacillales</taxon>
        <taxon>Staphylococcaceae</taxon>
        <taxon>Staphylococcus</taxon>
    </lineage>
</organism>
<protein>
    <recommendedName>
        <fullName>Poly-beta-1,6-N-acetyl-D-glucosamine synthase</fullName>
        <shortName>PNAG synthase</shortName>
        <shortName>Poly-beta-1,6-GlcNAc synthase</shortName>
        <ecNumber>2.4.1.-</ecNumber>
    </recommendedName>
    <alternativeName>
        <fullName>Biofilm polysaccharide intercellular adhesin synthesis protein IcaA</fullName>
        <shortName>Biofilm PIA synthesis protein IcaA</shortName>
    </alternativeName>
    <alternativeName>
        <fullName>Intercellular adhesion protein A</fullName>
    </alternativeName>
    <alternativeName>
        <fullName>N-acetylglucosaminyltransferase IcaA</fullName>
    </alternativeName>
</protein>
<feature type="chain" id="PRO_0000059277" description="Poly-beta-1,6-N-acetyl-D-glucosamine synthase">
    <location>
        <begin position="1"/>
        <end position="412"/>
    </location>
</feature>
<feature type="transmembrane region" description="Helical" evidence="2">
    <location>
        <begin position="6"/>
        <end position="28"/>
    </location>
</feature>
<feature type="transmembrane region" description="Helical" evidence="2">
    <location>
        <begin position="290"/>
        <end position="312"/>
    </location>
</feature>
<feature type="transmembrane region" description="Helical" evidence="2">
    <location>
        <begin position="332"/>
        <end position="354"/>
    </location>
</feature>
<feature type="transmembrane region" description="Helical" evidence="2">
    <location>
        <begin position="366"/>
        <end position="388"/>
    </location>
</feature>
<proteinExistence type="inferred from homology"/>
<accession>Q99QX3</accession>